<accession>A4FP42</accession>
<keyword id="KW-0028">Amino-acid biosynthesis</keyword>
<keyword id="KW-0368">Histidine biosynthesis</keyword>
<keyword id="KW-0378">Hydrolase</keyword>
<keyword id="KW-0486">Methionine biosynthesis</keyword>
<keyword id="KW-0511">Multifunctional enzyme</keyword>
<keyword id="KW-0521">NADP</keyword>
<keyword id="KW-0554">One-carbon metabolism</keyword>
<keyword id="KW-0560">Oxidoreductase</keyword>
<keyword id="KW-0658">Purine biosynthesis</keyword>
<keyword id="KW-1185">Reference proteome</keyword>
<proteinExistence type="inferred from homology"/>
<sequence>MSATILDGKATKNTIFEELRPRVARLAEQGRTPGLATVLVGDDPASHSYVRAKHNDCAKVGINSIRKELPADASQSDVEAVVDELNADPACHGYIIQLPLPEQLDAGPLLERIAPEKDADGLHPISLGRLVLGEQAPLPCTPRGIIELLRRYDVPLAGARVAVVGRGITVGRPIGLLLTRRSENATVTLCHTGTKDLAEEVRRADIVVAAAGRPHLITADMVRPGAAVLDVGVTRTDSGLAGDVHPDVAEVAGFLSPNPGGIGPMTRAMLLSNVVEAAERAAS</sequence>
<comment type="function">
    <text evidence="1">Catalyzes the oxidation of 5,10-methylenetetrahydrofolate to 5,10-methenyltetrahydrofolate and then the hydrolysis of 5,10-methenyltetrahydrofolate to 10-formyltetrahydrofolate.</text>
</comment>
<comment type="catalytic activity">
    <reaction evidence="1">
        <text>(6R)-5,10-methylene-5,6,7,8-tetrahydrofolate + NADP(+) = (6R)-5,10-methenyltetrahydrofolate + NADPH</text>
        <dbReference type="Rhea" id="RHEA:22812"/>
        <dbReference type="ChEBI" id="CHEBI:15636"/>
        <dbReference type="ChEBI" id="CHEBI:57455"/>
        <dbReference type="ChEBI" id="CHEBI:57783"/>
        <dbReference type="ChEBI" id="CHEBI:58349"/>
        <dbReference type="EC" id="1.5.1.5"/>
    </reaction>
</comment>
<comment type="catalytic activity">
    <reaction evidence="1">
        <text>(6R)-5,10-methenyltetrahydrofolate + H2O = (6R)-10-formyltetrahydrofolate + H(+)</text>
        <dbReference type="Rhea" id="RHEA:23700"/>
        <dbReference type="ChEBI" id="CHEBI:15377"/>
        <dbReference type="ChEBI" id="CHEBI:15378"/>
        <dbReference type="ChEBI" id="CHEBI:57455"/>
        <dbReference type="ChEBI" id="CHEBI:195366"/>
        <dbReference type="EC" id="3.5.4.9"/>
    </reaction>
</comment>
<comment type="pathway">
    <text evidence="1">One-carbon metabolism; tetrahydrofolate interconversion.</text>
</comment>
<comment type="subunit">
    <text evidence="1">Homodimer.</text>
</comment>
<comment type="similarity">
    <text evidence="1">Belongs to the tetrahydrofolate dehydrogenase/cyclohydrolase family.</text>
</comment>
<dbReference type="EC" id="1.5.1.5" evidence="1"/>
<dbReference type="EC" id="3.5.4.9" evidence="1"/>
<dbReference type="EMBL" id="AM420293">
    <property type="protein sequence ID" value="CAM05817.1"/>
    <property type="molecule type" value="Genomic_DNA"/>
</dbReference>
<dbReference type="RefSeq" id="WP_009949963.1">
    <property type="nucleotide sequence ID" value="NC_009142.1"/>
</dbReference>
<dbReference type="SMR" id="A4FP42"/>
<dbReference type="STRING" id="405948.SACE_6651"/>
<dbReference type="KEGG" id="sen:SACE_6651"/>
<dbReference type="eggNOG" id="COG0190">
    <property type="taxonomic scope" value="Bacteria"/>
</dbReference>
<dbReference type="HOGENOM" id="CLU_034045_3_0_11"/>
<dbReference type="OrthoDB" id="9803580at2"/>
<dbReference type="UniPathway" id="UPA00193"/>
<dbReference type="Proteomes" id="UP000006728">
    <property type="component" value="Chromosome"/>
</dbReference>
<dbReference type="GO" id="GO:0005829">
    <property type="term" value="C:cytosol"/>
    <property type="evidence" value="ECO:0007669"/>
    <property type="project" value="TreeGrafter"/>
</dbReference>
<dbReference type="GO" id="GO:0004477">
    <property type="term" value="F:methenyltetrahydrofolate cyclohydrolase activity"/>
    <property type="evidence" value="ECO:0007669"/>
    <property type="project" value="UniProtKB-UniRule"/>
</dbReference>
<dbReference type="GO" id="GO:0004488">
    <property type="term" value="F:methylenetetrahydrofolate dehydrogenase (NADP+) activity"/>
    <property type="evidence" value="ECO:0007669"/>
    <property type="project" value="UniProtKB-UniRule"/>
</dbReference>
<dbReference type="GO" id="GO:0000105">
    <property type="term" value="P:L-histidine biosynthetic process"/>
    <property type="evidence" value="ECO:0007669"/>
    <property type="project" value="UniProtKB-KW"/>
</dbReference>
<dbReference type="GO" id="GO:0009086">
    <property type="term" value="P:methionine biosynthetic process"/>
    <property type="evidence" value="ECO:0007669"/>
    <property type="project" value="UniProtKB-KW"/>
</dbReference>
<dbReference type="GO" id="GO:0006164">
    <property type="term" value="P:purine nucleotide biosynthetic process"/>
    <property type="evidence" value="ECO:0007669"/>
    <property type="project" value="UniProtKB-KW"/>
</dbReference>
<dbReference type="GO" id="GO:0035999">
    <property type="term" value="P:tetrahydrofolate interconversion"/>
    <property type="evidence" value="ECO:0007669"/>
    <property type="project" value="UniProtKB-UniRule"/>
</dbReference>
<dbReference type="CDD" id="cd01080">
    <property type="entry name" value="NAD_bind_m-THF_DH_Cyclohyd"/>
    <property type="match status" value="1"/>
</dbReference>
<dbReference type="FunFam" id="3.40.50.720:FF:000094">
    <property type="entry name" value="Bifunctional protein FolD"/>
    <property type="match status" value="1"/>
</dbReference>
<dbReference type="FunFam" id="3.40.50.10860:FF:000005">
    <property type="entry name" value="C-1-tetrahydrofolate synthase, cytoplasmic, putative"/>
    <property type="match status" value="1"/>
</dbReference>
<dbReference type="Gene3D" id="3.40.50.10860">
    <property type="entry name" value="Leucine Dehydrogenase, chain A, domain 1"/>
    <property type="match status" value="1"/>
</dbReference>
<dbReference type="Gene3D" id="3.40.50.720">
    <property type="entry name" value="NAD(P)-binding Rossmann-like Domain"/>
    <property type="match status" value="1"/>
</dbReference>
<dbReference type="HAMAP" id="MF_01576">
    <property type="entry name" value="THF_DHG_CYH"/>
    <property type="match status" value="1"/>
</dbReference>
<dbReference type="InterPro" id="IPR046346">
    <property type="entry name" value="Aminoacid_DH-like_N_sf"/>
</dbReference>
<dbReference type="InterPro" id="IPR036291">
    <property type="entry name" value="NAD(P)-bd_dom_sf"/>
</dbReference>
<dbReference type="InterPro" id="IPR000672">
    <property type="entry name" value="THF_DH/CycHdrlase"/>
</dbReference>
<dbReference type="InterPro" id="IPR020630">
    <property type="entry name" value="THF_DH/CycHdrlase_cat_dom"/>
</dbReference>
<dbReference type="InterPro" id="IPR020631">
    <property type="entry name" value="THF_DH/CycHdrlase_NAD-bd_dom"/>
</dbReference>
<dbReference type="NCBIfam" id="NF010789">
    <property type="entry name" value="PRK14193.1"/>
    <property type="match status" value="1"/>
</dbReference>
<dbReference type="PANTHER" id="PTHR48099:SF5">
    <property type="entry name" value="C-1-TETRAHYDROFOLATE SYNTHASE, CYTOPLASMIC"/>
    <property type="match status" value="1"/>
</dbReference>
<dbReference type="PANTHER" id="PTHR48099">
    <property type="entry name" value="C-1-TETRAHYDROFOLATE SYNTHASE, CYTOPLASMIC-RELATED"/>
    <property type="match status" value="1"/>
</dbReference>
<dbReference type="Pfam" id="PF00763">
    <property type="entry name" value="THF_DHG_CYH"/>
    <property type="match status" value="1"/>
</dbReference>
<dbReference type="Pfam" id="PF02882">
    <property type="entry name" value="THF_DHG_CYH_C"/>
    <property type="match status" value="1"/>
</dbReference>
<dbReference type="PRINTS" id="PR00085">
    <property type="entry name" value="THFDHDRGNASE"/>
</dbReference>
<dbReference type="SUPFAM" id="SSF53223">
    <property type="entry name" value="Aminoacid dehydrogenase-like, N-terminal domain"/>
    <property type="match status" value="1"/>
</dbReference>
<dbReference type="SUPFAM" id="SSF51735">
    <property type="entry name" value="NAD(P)-binding Rossmann-fold domains"/>
    <property type="match status" value="1"/>
</dbReference>
<feature type="chain" id="PRO_0000305875" description="Bifunctional protein FolD 2">
    <location>
        <begin position="1"/>
        <end position="283"/>
    </location>
</feature>
<feature type="binding site" evidence="1">
    <location>
        <begin position="165"/>
        <end position="167"/>
    </location>
    <ligand>
        <name>NADP(+)</name>
        <dbReference type="ChEBI" id="CHEBI:58349"/>
    </ligand>
</feature>
<feature type="binding site" evidence="1">
    <location>
        <position position="192"/>
    </location>
    <ligand>
        <name>NADP(+)</name>
        <dbReference type="ChEBI" id="CHEBI:58349"/>
    </ligand>
</feature>
<feature type="binding site" evidence="1">
    <location>
        <position position="233"/>
    </location>
    <ligand>
        <name>NADP(+)</name>
        <dbReference type="ChEBI" id="CHEBI:58349"/>
    </ligand>
</feature>
<gene>
    <name evidence="1" type="primary">folD2</name>
    <name type="ordered locus">SACE_6651</name>
</gene>
<protein>
    <recommendedName>
        <fullName evidence="1">Bifunctional protein FolD 2</fullName>
    </recommendedName>
    <domain>
        <recommendedName>
            <fullName evidence="1">Methylenetetrahydrofolate dehydrogenase</fullName>
            <ecNumber evidence="1">1.5.1.5</ecNumber>
        </recommendedName>
    </domain>
    <domain>
        <recommendedName>
            <fullName evidence="1">Methenyltetrahydrofolate cyclohydrolase</fullName>
            <ecNumber evidence="1">3.5.4.9</ecNumber>
        </recommendedName>
    </domain>
</protein>
<organism>
    <name type="scientific">Saccharopolyspora erythraea (strain ATCC 11635 / DSM 40517 / JCM 4748 / NBRC 13426 / NCIMB 8594 / NRRL 2338)</name>
    <dbReference type="NCBI Taxonomy" id="405948"/>
    <lineage>
        <taxon>Bacteria</taxon>
        <taxon>Bacillati</taxon>
        <taxon>Actinomycetota</taxon>
        <taxon>Actinomycetes</taxon>
        <taxon>Pseudonocardiales</taxon>
        <taxon>Pseudonocardiaceae</taxon>
        <taxon>Saccharopolyspora</taxon>
    </lineage>
</organism>
<evidence type="ECO:0000255" key="1">
    <source>
        <dbReference type="HAMAP-Rule" id="MF_01576"/>
    </source>
</evidence>
<reference key="1">
    <citation type="journal article" date="2007" name="Nat. Biotechnol.">
        <title>Complete genome sequence of the erythromycin-producing bacterium Saccharopolyspora erythraea NRRL23338.</title>
        <authorList>
            <person name="Oliynyk M."/>
            <person name="Samborskyy M."/>
            <person name="Lester J.B."/>
            <person name="Mironenko T."/>
            <person name="Scott N."/>
            <person name="Dickens S."/>
            <person name="Haydock S.F."/>
            <person name="Leadlay P.F."/>
        </authorList>
    </citation>
    <scope>NUCLEOTIDE SEQUENCE [LARGE SCALE GENOMIC DNA]</scope>
    <source>
        <strain>ATCC 11635 / DSM 40517 / JCM 4748 / NBRC 13426 / NCIMB 8594 / NRRL 2338</strain>
    </source>
</reference>
<name>FOLD2_SACEN</name>